<protein>
    <recommendedName>
        <fullName>Neurexophilin-3</fullName>
    </recommendedName>
</protein>
<evidence type="ECO:0000250" key="1"/>
<evidence type="ECO:0000255" key="2"/>
<evidence type="ECO:0000256" key="3">
    <source>
        <dbReference type="SAM" id="MobiDB-lite"/>
    </source>
</evidence>
<evidence type="ECO:0000269" key="4">
    <source>
    </source>
</evidence>
<evidence type="ECO:0000305" key="5"/>
<name>NXPH3_HUMAN</name>
<comment type="function">
    <text evidence="1">May be signaling molecules that resemble neuropeptides. Ligand for alpha-neurexins (By similarity).</text>
</comment>
<comment type="subcellular location">
    <subcellularLocation>
        <location evidence="5">Secreted</location>
    </subcellularLocation>
</comment>
<comment type="tissue specificity">
    <text>Highest level in brain.</text>
</comment>
<comment type="PTM">
    <text evidence="1">May be proteolytically processed at the boundary between the N-terminal non-conserved and the central conserved domain in neuron-like cells.</text>
</comment>
<comment type="similarity">
    <text evidence="5">Belongs to the neurexophilin family.</text>
</comment>
<proteinExistence type="evidence at protein level"/>
<dbReference type="EMBL" id="AY358526">
    <property type="protein sequence ID" value="AAQ88890.1"/>
    <property type="molecule type" value="mRNA"/>
</dbReference>
<dbReference type="EMBL" id="AL834282">
    <property type="protein sequence ID" value="CAD38956.2"/>
    <property type="molecule type" value="mRNA"/>
</dbReference>
<dbReference type="EMBL" id="CH471109">
    <property type="protein sequence ID" value="EAW94676.1"/>
    <property type="molecule type" value="Genomic_DNA"/>
</dbReference>
<dbReference type="EMBL" id="BC022541">
    <property type="protein sequence ID" value="AAH22541.1"/>
    <property type="molecule type" value="mRNA"/>
</dbReference>
<dbReference type="EMBL" id="AB032985">
    <property type="protein sequence ID" value="BAA86473.1"/>
    <property type="molecule type" value="mRNA"/>
</dbReference>
<dbReference type="EMBL" id="AF043468">
    <property type="protein sequence ID" value="AAD02281.1"/>
    <property type="molecule type" value="mRNA"/>
</dbReference>
<dbReference type="CCDS" id="CCDS11550.1"/>
<dbReference type="RefSeq" id="NP_009156.2">
    <property type="nucleotide sequence ID" value="NM_007225.4"/>
</dbReference>
<dbReference type="SMR" id="O95157"/>
<dbReference type="BioGRID" id="116409">
    <property type="interactions" value="87"/>
</dbReference>
<dbReference type="FunCoup" id="O95157">
    <property type="interactions" value="32"/>
</dbReference>
<dbReference type="IntAct" id="O95157">
    <property type="interactions" value="59"/>
</dbReference>
<dbReference type="MINT" id="O95157"/>
<dbReference type="STRING" id="9606.ENSP00000329295"/>
<dbReference type="GlyCosmos" id="O95157">
    <property type="glycosylation" value="4 sites, No reported glycans"/>
</dbReference>
<dbReference type="GlyGen" id="O95157">
    <property type="glycosylation" value="4 sites"/>
</dbReference>
<dbReference type="iPTMnet" id="O95157"/>
<dbReference type="PhosphoSitePlus" id="O95157"/>
<dbReference type="BioMuta" id="NXPH3"/>
<dbReference type="MassIVE" id="O95157"/>
<dbReference type="PaxDb" id="9606-ENSP00000329295"/>
<dbReference type="PeptideAtlas" id="O95157"/>
<dbReference type="ProteomicsDB" id="50674"/>
<dbReference type="Antibodypedia" id="30401">
    <property type="antibodies" value="172 antibodies from 26 providers"/>
</dbReference>
<dbReference type="DNASU" id="11248"/>
<dbReference type="Ensembl" id="ENST00000328741.6">
    <property type="protein sequence ID" value="ENSP00000329295.6"/>
    <property type="gene ID" value="ENSG00000182575.8"/>
</dbReference>
<dbReference type="GeneID" id="11248"/>
<dbReference type="KEGG" id="hsa:11248"/>
<dbReference type="MANE-Select" id="ENST00000328741.6">
    <property type="protein sequence ID" value="ENSP00000329295.6"/>
    <property type="RefSeq nucleotide sequence ID" value="NM_007225.4"/>
    <property type="RefSeq protein sequence ID" value="NP_009156.2"/>
</dbReference>
<dbReference type="UCSC" id="uc002ipa.4">
    <property type="organism name" value="human"/>
</dbReference>
<dbReference type="AGR" id="HGNC:8077"/>
<dbReference type="CTD" id="11248"/>
<dbReference type="DisGeNET" id="11248"/>
<dbReference type="GeneCards" id="NXPH3"/>
<dbReference type="HGNC" id="HGNC:8077">
    <property type="gene designation" value="NXPH3"/>
</dbReference>
<dbReference type="HPA" id="ENSG00000182575">
    <property type="expression patterns" value="Tissue enhanced (brain)"/>
</dbReference>
<dbReference type="MalaCards" id="NXPH3"/>
<dbReference type="MIM" id="604636">
    <property type="type" value="gene"/>
</dbReference>
<dbReference type="neXtProt" id="NX_O95157"/>
<dbReference type="OpenTargets" id="ENSG00000182575"/>
<dbReference type="PharmGKB" id="PA31865"/>
<dbReference type="VEuPathDB" id="HostDB:ENSG00000182575"/>
<dbReference type="eggNOG" id="ENOG502QSZ5">
    <property type="taxonomic scope" value="Eukaryota"/>
</dbReference>
<dbReference type="GeneTree" id="ENSGT00950000182883"/>
<dbReference type="HOGENOM" id="CLU_067114_2_0_1"/>
<dbReference type="InParanoid" id="O95157"/>
<dbReference type="OMA" id="PSKTCYH"/>
<dbReference type="OrthoDB" id="9887748at2759"/>
<dbReference type="PAN-GO" id="O95157">
    <property type="GO annotations" value="1 GO annotation based on evolutionary models"/>
</dbReference>
<dbReference type="PhylomeDB" id="O95157"/>
<dbReference type="TreeFam" id="TF333047"/>
<dbReference type="PathwayCommons" id="O95157"/>
<dbReference type="SignaLink" id="O95157"/>
<dbReference type="BioGRID-ORCS" id="11248">
    <property type="hits" value="12 hits in 1148 CRISPR screens"/>
</dbReference>
<dbReference type="GeneWiki" id="NXPH3"/>
<dbReference type="GenomeRNAi" id="11248"/>
<dbReference type="Pharos" id="O95157">
    <property type="development level" value="Tdark"/>
</dbReference>
<dbReference type="PRO" id="PR:O95157"/>
<dbReference type="Proteomes" id="UP000005640">
    <property type="component" value="Chromosome 17"/>
</dbReference>
<dbReference type="RNAct" id="O95157">
    <property type="molecule type" value="protein"/>
</dbReference>
<dbReference type="Bgee" id="ENSG00000182575">
    <property type="expression patterns" value="Expressed in cortical plate and 166 other cell types or tissues"/>
</dbReference>
<dbReference type="ExpressionAtlas" id="O95157">
    <property type="expression patterns" value="baseline and differential"/>
</dbReference>
<dbReference type="GO" id="GO:0005576">
    <property type="term" value="C:extracellular region"/>
    <property type="evidence" value="ECO:0007669"/>
    <property type="project" value="UniProtKB-SubCell"/>
</dbReference>
<dbReference type="GO" id="GO:0005102">
    <property type="term" value="F:signaling receptor binding"/>
    <property type="evidence" value="ECO:0000318"/>
    <property type="project" value="GO_Central"/>
</dbReference>
<dbReference type="GO" id="GO:0007218">
    <property type="term" value="P:neuropeptide signaling pathway"/>
    <property type="evidence" value="ECO:0000303"/>
    <property type="project" value="UniProtKB"/>
</dbReference>
<dbReference type="InterPro" id="IPR010450">
    <property type="entry name" value="Nxph"/>
</dbReference>
<dbReference type="InterPro" id="IPR026845">
    <property type="entry name" value="NXPH/NXPE"/>
</dbReference>
<dbReference type="PANTHER" id="PTHR17103">
    <property type="entry name" value="NEUREXOPHILIN"/>
    <property type="match status" value="1"/>
</dbReference>
<dbReference type="PANTHER" id="PTHR17103:SF14">
    <property type="entry name" value="NEUREXOPHILIN-3"/>
    <property type="match status" value="1"/>
</dbReference>
<dbReference type="Pfam" id="PF06312">
    <property type="entry name" value="Neurexophilin"/>
    <property type="match status" value="1"/>
</dbReference>
<dbReference type="PIRSF" id="PIRSF038019">
    <property type="entry name" value="Neurexophilin"/>
    <property type="match status" value="1"/>
</dbReference>
<organism>
    <name type="scientific">Homo sapiens</name>
    <name type="common">Human</name>
    <dbReference type="NCBI Taxonomy" id="9606"/>
    <lineage>
        <taxon>Eukaryota</taxon>
        <taxon>Metazoa</taxon>
        <taxon>Chordata</taxon>
        <taxon>Craniata</taxon>
        <taxon>Vertebrata</taxon>
        <taxon>Euteleostomi</taxon>
        <taxon>Mammalia</taxon>
        <taxon>Eutheria</taxon>
        <taxon>Euarchontoglires</taxon>
        <taxon>Primates</taxon>
        <taxon>Haplorrhini</taxon>
        <taxon>Catarrhini</taxon>
        <taxon>Hominidae</taxon>
        <taxon>Homo</taxon>
    </lineage>
</organism>
<keyword id="KW-0903">Direct protein sequencing</keyword>
<keyword id="KW-0325">Glycoprotein</keyword>
<keyword id="KW-1267">Proteomics identification</keyword>
<keyword id="KW-1185">Reference proteome</keyword>
<keyword id="KW-0964">Secreted</keyword>
<keyword id="KW-0732">Signal</keyword>
<feature type="signal peptide" evidence="4">
    <location>
        <begin position="1"/>
        <end position="22"/>
    </location>
</feature>
<feature type="chain" id="PRO_0000020065" description="Neurexophilin-3">
    <location>
        <begin position="23"/>
        <end position="252"/>
    </location>
</feature>
<feature type="region of interest" description="II">
    <location>
        <begin position="23"/>
        <end position="75"/>
    </location>
</feature>
<feature type="region of interest" description="Disordered" evidence="3">
    <location>
        <begin position="27"/>
        <end position="58"/>
    </location>
</feature>
<feature type="region of interest" description="III">
    <location>
        <begin position="76"/>
        <end position="157"/>
    </location>
</feature>
<feature type="region of interest" description="IV (linker domain)">
    <location>
        <begin position="158"/>
        <end position="166"/>
    </location>
</feature>
<feature type="region of interest" description="V (Cys-rich)">
    <location>
        <begin position="167"/>
        <end position="252"/>
    </location>
</feature>
<feature type="compositionally biased region" description="Basic residues" evidence="3">
    <location>
        <begin position="45"/>
        <end position="55"/>
    </location>
</feature>
<feature type="glycosylation site" description="N-linked (GlcNAc...) asparagine" evidence="2">
    <location>
        <position position="62"/>
    </location>
</feature>
<feature type="glycosylation site" description="N-linked (GlcNAc...) asparagine" evidence="2">
    <location>
        <position position="127"/>
    </location>
</feature>
<feature type="glycosylation site" description="N-linked (GlcNAc...) asparagine" evidence="2">
    <location>
        <position position="137"/>
    </location>
</feature>
<feature type="glycosylation site" description="N-linked (GlcNAc...) asparagine" evidence="2">
    <location>
        <position position="143"/>
    </location>
</feature>
<feature type="sequence conflict" description="In Ref. 4; AAH22541." evidence="5" ref="4">
    <original>E</original>
    <variation>G</variation>
    <location>
        <position position="178"/>
    </location>
</feature>
<gene>
    <name type="primary">NXPH3</name>
    <name type="synonym">KIAA1159</name>
    <name type="synonym">NPH3</name>
    <name type="ORF">UNQ687/PRO1327</name>
</gene>
<accession>O95157</accession>
<accession>Q8NDC3</accession>
<accession>Q8TBF6</accession>
<accession>Q9ULR1</accession>
<reference key="1">
    <citation type="journal article" date="2003" name="Genome Res.">
        <title>The secreted protein discovery initiative (SPDI), a large-scale effort to identify novel human secreted and transmembrane proteins: a bioinformatics assessment.</title>
        <authorList>
            <person name="Clark H.F."/>
            <person name="Gurney A.L."/>
            <person name="Abaya E."/>
            <person name="Baker K."/>
            <person name="Baldwin D.T."/>
            <person name="Brush J."/>
            <person name="Chen J."/>
            <person name="Chow B."/>
            <person name="Chui C."/>
            <person name="Crowley C."/>
            <person name="Currell B."/>
            <person name="Deuel B."/>
            <person name="Dowd P."/>
            <person name="Eaton D."/>
            <person name="Foster J.S."/>
            <person name="Grimaldi C."/>
            <person name="Gu Q."/>
            <person name="Hass P.E."/>
            <person name="Heldens S."/>
            <person name="Huang A."/>
            <person name="Kim H.S."/>
            <person name="Klimowski L."/>
            <person name="Jin Y."/>
            <person name="Johnson S."/>
            <person name="Lee J."/>
            <person name="Lewis L."/>
            <person name="Liao D."/>
            <person name="Mark M.R."/>
            <person name="Robbie E."/>
            <person name="Sanchez C."/>
            <person name="Schoenfeld J."/>
            <person name="Seshagiri S."/>
            <person name="Simmons L."/>
            <person name="Singh J."/>
            <person name="Smith V."/>
            <person name="Stinson J."/>
            <person name="Vagts A."/>
            <person name="Vandlen R.L."/>
            <person name="Watanabe C."/>
            <person name="Wieand D."/>
            <person name="Woods K."/>
            <person name="Xie M.-H."/>
            <person name="Yansura D.G."/>
            <person name="Yi S."/>
            <person name="Yu G."/>
            <person name="Yuan J."/>
            <person name="Zhang M."/>
            <person name="Zhang Z."/>
            <person name="Goddard A.D."/>
            <person name="Wood W.I."/>
            <person name="Godowski P.J."/>
            <person name="Gray A.M."/>
        </authorList>
    </citation>
    <scope>NUCLEOTIDE SEQUENCE [LARGE SCALE MRNA]</scope>
</reference>
<reference key="2">
    <citation type="journal article" date="2007" name="BMC Genomics">
        <title>The full-ORF clone resource of the German cDNA consortium.</title>
        <authorList>
            <person name="Bechtel S."/>
            <person name="Rosenfelder H."/>
            <person name="Duda A."/>
            <person name="Schmidt C.P."/>
            <person name="Ernst U."/>
            <person name="Wellenreuther R."/>
            <person name="Mehrle A."/>
            <person name="Schuster C."/>
            <person name="Bahr A."/>
            <person name="Bloecker H."/>
            <person name="Heubner D."/>
            <person name="Hoerlein A."/>
            <person name="Michel G."/>
            <person name="Wedler H."/>
            <person name="Koehrer K."/>
            <person name="Ottenwaelder B."/>
            <person name="Poustka A."/>
            <person name="Wiemann S."/>
            <person name="Schupp I."/>
        </authorList>
    </citation>
    <scope>NUCLEOTIDE SEQUENCE [LARGE SCALE MRNA]</scope>
    <source>
        <tissue>Brain</tissue>
    </source>
</reference>
<reference key="3">
    <citation type="submission" date="2005-09" db="EMBL/GenBank/DDBJ databases">
        <authorList>
            <person name="Mural R.J."/>
            <person name="Istrail S."/>
            <person name="Sutton G.G."/>
            <person name="Florea L."/>
            <person name="Halpern A.L."/>
            <person name="Mobarry C.M."/>
            <person name="Lippert R."/>
            <person name="Walenz B."/>
            <person name="Shatkay H."/>
            <person name="Dew I."/>
            <person name="Miller J.R."/>
            <person name="Flanigan M.J."/>
            <person name="Edwards N.J."/>
            <person name="Bolanos R."/>
            <person name="Fasulo D."/>
            <person name="Halldorsson B.V."/>
            <person name="Hannenhalli S."/>
            <person name="Turner R."/>
            <person name="Yooseph S."/>
            <person name="Lu F."/>
            <person name="Nusskern D.R."/>
            <person name="Shue B.C."/>
            <person name="Zheng X.H."/>
            <person name="Zhong F."/>
            <person name="Delcher A.L."/>
            <person name="Huson D.H."/>
            <person name="Kravitz S.A."/>
            <person name="Mouchard L."/>
            <person name="Reinert K."/>
            <person name="Remington K.A."/>
            <person name="Clark A.G."/>
            <person name="Waterman M.S."/>
            <person name="Eichler E.E."/>
            <person name="Adams M.D."/>
            <person name="Hunkapiller M.W."/>
            <person name="Myers E.W."/>
            <person name="Venter J.C."/>
        </authorList>
    </citation>
    <scope>NUCLEOTIDE SEQUENCE [LARGE SCALE GENOMIC DNA]</scope>
</reference>
<reference key="4">
    <citation type="journal article" date="2004" name="Genome Res.">
        <title>The status, quality, and expansion of the NIH full-length cDNA project: the Mammalian Gene Collection (MGC).</title>
        <authorList>
            <consortium name="The MGC Project Team"/>
        </authorList>
    </citation>
    <scope>NUCLEOTIDE SEQUENCE [LARGE SCALE MRNA]</scope>
    <source>
        <tissue>Hypothalamus</tissue>
    </source>
</reference>
<reference key="5">
    <citation type="journal article" date="1999" name="DNA Res.">
        <title>Characterization of cDNA clones selected by the GeneMark analysis from size-fractionated cDNA libraries from human brain.</title>
        <authorList>
            <person name="Hirosawa M."/>
            <person name="Nagase T."/>
            <person name="Ishikawa K."/>
            <person name="Kikuno R."/>
            <person name="Nomura N."/>
            <person name="Ohara O."/>
        </authorList>
    </citation>
    <scope>NUCLEOTIDE SEQUENCE [LARGE SCALE MRNA] OF 32-252</scope>
    <source>
        <tissue>Brain</tissue>
    </source>
</reference>
<reference key="6">
    <citation type="journal article" date="1998" name="J. Neurosci.">
        <title>Neurexophilins form a conserved family of neuropeptide-like glycoproteins.</title>
        <authorList>
            <person name="Missler M."/>
            <person name="Suedhof T.C."/>
        </authorList>
    </citation>
    <scope>NUCLEOTIDE SEQUENCE [MRNA] OF 80-252</scope>
</reference>
<reference key="7">
    <citation type="journal article" date="2004" name="Protein Sci.">
        <title>Signal peptide prediction based on analysis of experimentally verified cleavage sites.</title>
        <authorList>
            <person name="Zhang Z."/>
            <person name="Henzel W.J."/>
        </authorList>
    </citation>
    <scope>PROTEIN SEQUENCE OF 23-37</scope>
</reference>
<sequence>MQLTRCCFVFLVQGSLYLVICGQDDGPPGSEDPERDDHEGQPRPRVPRKRGHISPKSRPMANSTLLGLLAPPGEAWGILGQPPNRPNHSPPPSAKVKKIFGWGDFYSNIKTVALNLLVTGKIVDHGNGTFSVHFQHNATGQGNISISLVPPSKAVEFHQEQQIFIEAKASKIFNCRMEWEKVERGRRTSLCTHDPAKICSRDHAQSSATWSCSQPFKVVCVYIAFYSTDYRLVQKVCPDYNYHSDTPYYPSG</sequence>